<name>DAPA_PSE14</name>
<organism>
    <name type="scientific">Pseudomonas savastanoi pv. phaseolicola (strain 1448A / Race 6)</name>
    <name type="common">Pseudomonas syringae pv. phaseolicola (strain 1448A / Race 6)</name>
    <dbReference type="NCBI Taxonomy" id="264730"/>
    <lineage>
        <taxon>Bacteria</taxon>
        <taxon>Pseudomonadati</taxon>
        <taxon>Pseudomonadota</taxon>
        <taxon>Gammaproteobacteria</taxon>
        <taxon>Pseudomonadales</taxon>
        <taxon>Pseudomonadaceae</taxon>
        <taxon>Pseudomonas</taxon>
    </lineage>
</organism>
<comment type="function">
    <text evidence="1">Catalyzes the condensation of (S)-aspartate-beta-semialdehyde [(S)-ASA] and pyruvate to 4-hydroxy-tetrahydrodipicolinate (HTPA).</text>
</comment>
<comment type="catalytic activity">
    <reaction evidence="1">
        <text>L-aspartate 4-semialdehyde + pyruvate = (2S,4S)-4-hydroxy-2,3,4,5-tetrahydrodipicolinate + H2O + H(+)</text>
        <dbReference type="Rhea" id="RHEA:34171"/>
        <dbReference type="ChEBI" id="CHEBI:15361"/>
        <dbReference type="ChEBI" id="CHEBI:15377"/>
        <dbReference type="ChEBI" id="CHEBI:15378"/>
        <dbReference type="ChEBI" id="CHEBI:67139"/>
        <dbReference type="ChEBI" id="CHEBI:537519"/>
        <dbReference type="EC" id="4.3.3.7"/>
    </reaction>
</comment>
<comment type="pathway">
    <text evidence="1">Amino-acid biosynthesis; L-lysine biosynthesis via DAP pathway; (S)-tetrahydrodipicolinate from L-aspartate: step 3/4.</text>
</comment>
<comment type="subunit">
    <text evidence="1">Homodimer.</text>
</comment>
<comment type="subcellular location">
    <subcellularLocation>
        <location evidence="1">Cytoplasm</location>
    </subcellularLocation>
</comment>
<comment type="similarity">
    <text evidence="1">Belongs to the DapA family.</text>
</comment>
<comment type="caution">
    <text evidence="2">Was originally thought to be a dihydrodipicolinate synthase (DHDPS), catalyzing the condensation of (S)-aspartate-beta-semialdehyde [(S)-ASA] and pyruvate to dihydrodipicolinate (DHDP). However, it was shown in E.coli that the product of the enzymatic reaction is not dihydrodipicolinate but in fact (4S)-4-hydroxy-2,3,4,5-tetrahydro-(2S)-dipicolinic acid (HTPA), and that the consecutive dehydration reaction leading to DHDP is not spontaneous but catalyzed by DapB.</text>
</comment>
<evidence type="ECO:0000255" key="1">
    <source>
        <dbReference type="HAMAP-Rule" id="MF_00418"/>
    </source>
</evidence>
<evidence type="ECO:0000305" key="2"/>
<protein>
    <recommendedName>
        <fullName evidence="1">4-hydroxy-tetrahydrodipicolinate synthase</fullName>
        <shortName evidence="1">HTPA synthase</shortName>
        <ecNumber evidence="1">4.3.3.7</ecNumber>
    </recommendedName>
</protein>
<accession>Q48LD5</accession>
<dbReference type="EC" id="4.3.3.7" evidence="1"/>
<dbReference type="EMBL" id="CP000058">
    <property type="protein sequence ID" value="AAZ37002.1"/>
    <property type="molecule type" value="Genomic_DNA"/>
</dbReference>
<dbReference type="RefSeq" id="WP_004657692.1">
    <property type="nucleotide sequence ID" value="NC_005773.3"/>
</dbReference>
<dbReference type="SMR" id="Q48LD5"/>
<dbReference type="KEGG" id="psp:PSPPH_1537"/>
<dbReference type="eggNOG" id="COG0329">
    <property type="taxonomic scope" value="Bacteria"/>
</dbReference>
<dbReference type="HOGENOM" id="CLU_049343_7_1_6"/>
<dbReference type="UniPathway" id="UPA00034">
    <property type="reaction ID" value="UER00017"/>
</dbReference>
<dbReference type="Proteomes" id="UP000000551">
    <property type="component" value="Chromosome"/>
</dbReference>
<dbReference type="GO" id="GO:0005829">
    <property type="term" value="C:cytosol"/>
    <property type="evidence" value="ECO:0007669"/>
    <property type="project" value="TreeGrafter"/>
</dbReference>
<dbReference type="GO" id="GO:0008840">
    <property type="term" value="F:4-hydroxy-tetrahydrodipicolinate synthase activity"/>
    <property type="evidence" value="ECO:0007669"/>
    <property type="project" value="UniProtKB-UniRule"/>
</dbReference>
<dbReference type="GO" id="GO:0019877">
    <property type="term" value="P:diaminopimelate biosynthetic process"/>
    <property type="evidence" value="ECO:0007669"/>
    <property type="project" value="UniProtKB-UniRule"/>
</dbReference>
<dbReference type="GO" id="GO:0009089">
    <property type="term" value="P:lysine biosynthetic process via diaminopimelate"/>
    <property type="evidence" value="ECO:0007669"/>
    <property type="project" value="UniProtKB-UniRule"/>
</dbReference>
<dbReference type="CDD" id="cd00950">
    <property type="entry name" value="DHDPS"/>
    <property type="match status" value="1"/>
</dbReference>
<dbReference type="Gene3D" id="3.20.20.70">
    <property type="entry name" value="Aldolase class I"/>
    <property type="match status" value="1"/>
</dbReference>
<dbReference type="HAMAP" id="MF_00418">
    <property type="entry name" value="DapA"/>
    <property type="match status" value="1"/>
</dbReference>
<dbReference type="InterPro" id="IPR013785">
    <property type="entry name" value="Aldolase_TIM"/>
</dbReference>
<dbReference type="InterPro" id="IPR005263">
    <property type="entry name" value="DapA"/>
</dbReference>
<dbReference type="InterPro" id="IPR002220">
    <property type="entry name" value="DapA-like"/>
</dbReference>
<dbReference type="InterPro" id="IPR020625">
    <property type="entry name" value="Schiff_base-form_aldolases_AS"/>
</dbReference>
<dbReference type="InterPro" id="IPR020624">
    <property type="entry name" value="Schiff_base-form_aldolases_CS"/>
</dbReference>
<dbReference type="NCBIfam" id="TIGR00674">
    <property type="entry name" value="dapA"/>
    <property type="match status" value="1"/>
</dbReference>
<dbReference type="PANTHER" id="PTHR12128:SF66">
    <property type="entry name" value="4-HYDROXY-2-OXOGLUTARATE ALDOLASE, MITOCHONDRIAL"/>
    <property type="match status" value="1"/>
</dbReference>
<dbReference type="PANTHER" id="PTHR12128">
    <property type="entry name" value="DIHYDRODIPICOLINATE SYNTHASE"/>
    <property type="match status" value="1"/>
</dbReference>
<dbReference type="Pfam" id="PF00701">
    <property type="entry name" value="DHDPS"/>
    <property type="match status" value="1"/>
</dbReference>
<dbReference type="PIRSF" id="PIRSF001365">
    <property type="entry name" value="DHDPS"/>
    <property type="match status" value="1"/>
</dbReference>
<dbReference type="PRINTS" id="PR00146">
    <property type="entry name" value="DHPICSNTHASE"/>
</dbReference>
<dbReference type="SMART" id="SM01130">
    <property type="entry name" value="DHDPS"/>
    <property type="match status" value="1"/>
</dbReference>
<dbReference type="SUPFAM" id="SSF51569">
    <property type="entry name" value="Aldolase"/>
    <property type="match status" value="1"/>
</dbReference>
<dbReference type="PROSITE" id="PS00665">
    <property type="entry name" value="DHDPS_1"/>
    <property type="match status" value="1"/>
</dbReference>
<dbReference type="PROSITE" id="PS00666">
    <property type="entry name" value="DHDPS_2"/>
    <property type="match status" value="1"/>
</dbReference>
<reference key="1">
    <citation type="journal article" date="2005" name="J. Bacteriol.">
        <title>Whole-genome sequence analysis of Pseudomonas syringae pv. phaseolicola 1448A reveals divergence among pathovars in genes involved in virulence and transposition.</title>
        <authorList>
            <person name="Joardar V."/>
            <person name="Lindeberg M."/>
            <person name="Jackson R.W."/>
            <person name="Selengut J."/>
            <person name="Dodson R."/>
            <person name="Brinkac L.M."/>
            <person name="Daugherty S.C."/>
            <person name="DeBoy R.T."/>
            <person name="Durkin A.S."/>
            <person name="Gwinn Giglio M."/>
            <person name="Madupu R."/>
            <person name="Nelson W.C."/>
            <person name="Rosovitz M.J."/>
            <person name="Sullivan S.A."/>
            <person name="Crabtree J."/>
            <person name="Creasy T."/>
            <person name="Davidsen T.M."/>
            <person name="Haft D.H."/>
            <person name="Zafar N."/>
            <person name="Zhou L."/>
            <person name="Halpin R."/>
            <person name="Holley T."/>
            <person name="Khouri H.M."/>
            <person name="Feldblyum T.V."/>
            <person name="White O."/>
            <person name="Fraser C.M."/>
            <person name="Chatterjee A.K."/>
            <person name="Cartinhour S."/>
            <person name="Schneider D."/>
            <person name="Mansfield J.W."/>
            <person name="Collmer A."/>
            <person name="Buell R."/>
        </authorList>
    </citation>
    <scope>NUCLEOTIDE SEQUENCE [LARGE SCALE GENOMIC DNA]</scope>
    <source>
        <strain>1448A / Race 6</strain>
    </source>
</reference>
<sequence length="292" mass="31175">MIAGSMVALVTPMDAQGRLDWDSLSKLVDFHLQEGTNAIVAVGTTGESATLDVSEHIEVIRRVVAQVAGRIPVIAGTGANSTREAVELTTNAKTAGADACLLVTPYYNKPTQEGLFQHFSHIANAVDIPQILYNVPGRTACDMLPETVARLSTVKNIIGIKEATGNLQRAKDILASVSSDFLVYSGDDATAVELMLLGGKGNISVTANVAPRLMSDLCAAAMRGDAETARAIHEKLMPLNNTLFIESNPIPVKWALHEMGKMPAGIRLPLTWLSEACHEPLRQALRQSGVLV</sequence>
<proteinExistence type="inferred from homology"/>
<keyword id="KW-0028">Amino-acid biosynthesis</keyword>
<keyword id="KW-0963">Cytoplasm</keyword>
<keyword id="KW-0220">Diaminopimelate biosynthesis</keyword>
<keyword id="KW-0456">Lyase</keyword>
<keyword id="KW-0457">Lysine biosynthesis</keyword>
<keyword id="KW-0704">Schiff base</keyword>
<gene>
    <name evidence="1" type="primary">dapA</name>
    <name type="ordered locus">PSPPH_1537</name>
</gene>
<feature type="chain" id="PRO_1000050246" description="4-hydroxy-tetrahydrodipicolinate synthase">
    <location>
        <begin position="1"/>
        <end position="292"/>
    </location>
</feature>
<feature type="active site" description="Proton donor/acceptor" evidence="1">
    <location>
        <position position="133"/>
    </location>
</feature>
<feature type="active site" description="Schiff-base intermediate with substrate" evidence="1">
    <location>
        <position position="161"/>
    </location>
</feature>
<feature type="binding site" evidence="1">
    <location>
        <position position="45"/>
    </location>
    <ligand>
        <name>pyruvate</name>
        <dbReference type="ChEBI" id="CHEBI:15361"/>
    </ligand>
</feature>
<feature type="binding site" evidence="1">
    <location>
        <position position="203"/>
    </location>
    <ligand>
        <name>pyruvate</name>
        <dbReference type="ChEBI" id="CHEBI:15361"/>
    </ligand>
</feature>
<feature type="site" description="Part of a proton relay during catalysis" evidence="1">
    <location>
        <position position="44"/>
    </location>
</feature>
<feature type="site" description="Part of a proton relay during catalysis" evidence="1">
    <location>
        <position position="107"/>
    </location>
</feature>